<feature type="chain" id="PRO_1000128297" description="Small ribosomal subunit protein uS14">
    <location>
        <begin position="1"/>
        <end position="101"/>
    </location>
</feature>
<evidence type="ECO:0000255" key="1">
    <source>
        <dbReference type="HAMAP-Rule" id="MF_00537"/>
    </source>
</evidence>
<evidence type="ECO:0000305" key="2"/>
<sequence>MAKKSMIAKNEQRKVIVERYAAKRLELKKALVDPASTDEAREAARLGLQKLPRNASPVRLRNRDIIDGRPRGTFQKFGISRVRFRDMAHRGELPGITKSSW</sequence>
<name>RS14_ARTS2</name>
<organism>
    <name type="scientific">Arthrobacter sp. (strain FB24)</name>
    <dbReference type="NCBI Taxonomy" id="290399"/>
    <lineage>
        <taxon>Bacteria</taxon>
        <taxon>Bacillati</taxon>
        <taxon>Actinomycetota</taxon>
        <taxon>Actinomycetes</taxon>
        <taxon>Micrococcales</taxon>
        <taxon>Micrococcaceae</taxon>
        <taxon>Arthrobacter</taxon>
    </lineage>
</organism>
<dbReference type="EMBL" id="CP000454">
    <property type="protein sequence ID" value="ABK05294.1"/>
    <property type="molecule type" value="Genomic_DNA"/>
</dbReference>
<dbReference type="RefSeq" id="WP_011693742.1">
    <property type="nucleotide sequence ID" value="NC_008541.1"/>
</dbReference>
<dbReference type="SMR" id="A0K1X4"/>
<dbReference type="STRING" id="290399.Arth_3919"/>
<dbReference type="KEGG" id="art:Arth_3919"/>
<dbReference type="eggNOG" id="COG0199">
    <property type="taxonomic scope" value="Bacteria"/>
</dbReference>
<dbReference type="HOGENOM" id="CLU_139869_0_1_11"/>
<dbReference type="OrthoDB" id="9810484at2"/>
<dbReference type="Proteomes" id="UP000000754">
    <property type="component" value="Chromosome"/>
</dbReference>
<dbReference type="GO" id="GO:0015935">
    <property type="term" value="C:small ribosomal subunit"/>
    <property type="evidence" value="ECO:0007669"/>
    <property type="project" value="TreeGrafter"/>
</dbReference>
<dbReference type="GO" id="GO:0019843">
    <property type="term" value="F:rRNA binding"/>
    <property type="evidence" value="ECO:0007669"/>
    <property type="project" value="UniProtKB-UniRule"/>
</dbReference>
<dbReference type="GO" id="GO:0003735">
    <property type="term" value="F:structural constituent of ribosome"/>
    <property type="evidence" value="ECO:0007669"/>
    <property type="project" value="InterPro"/>
</dbReference>
<dbReference type="GO" id="GO:0006412">
    <property type="term" value="P:translation"/>
    <property type="evidence" value="ECO:0007669"/>
    <property type="project" value="UniProtKB-UniRule"/>
</dbReference>
<dbReference type="FunFam" id="1.10.287.1480:FF:000001">
    <property type="entry name" value="30S ribosomal protein S14"/>
    <property type="match status" value="1"/>
</dbReference>
<dbReference type="Gene3D" id="1.10.287.1480">
    <property type="match status" value="1"/>
</dbReference>
<dbReference type="HAMAP" id="MF_00537">
    <property type="entry name" value="Ribosomal_uS14_1"/>
    <property type="match status" value="1"/>
</dbReference>
<dbReference type="InterPro" id="IPR001209">
    <property type="entry name" value="Ribosomal_uS14"/>
</dbReference>
<dbReference type="InterPro" id="IPR023036">
    <property type="entry name" value="Ribosomal_uS14_bac/plastid"/>
</dbReference>
<dbReference type="NCBIfam" id="NF006477">
    <property type="entry name" value="PRK08881.1"/>
    <property type="match status" value="1"/>
</dbReference>
<dbReference type="PANTHER" id="PTHR19836">
    <property type="entry name" value="30S RIBOSOMAL PROTEIN S14"/>
    <property type="match status" value="1"/>
</dbReference>
<dbReference type="PANTHER" id="PTHR19836:SF23">
    <property type="entry name" value="SMALL RIBOSOMAL SUBUNIT PROTEIN US14A"/>
    <property type="match status" value="1"/>
</dbReference>
<dbReference type="Pfam" id="PF00253">
    <property type="entry name" value="Ribosomal_S14"/>
    <property type="match status" value="1"/>
</dbReference>
<dbReference type="SUPFAM" id="SSF57716">
    <property type="entry name" value="Glucocorticoid receptor-like (DNA-binding domain)"/>
    <property type="match status" value="1"/>
</dbReference>
<protein>
    <recommendedName>
        <fullName evidence="1">Small ribosomal subunit protein uS14</fullName>
    </recommendedName>
    <alternativeName>
        <fullName evidence="2">30S ribosomal protein S14</fullName>
    </alternativeName>
</protein>
<accession>A0K1X4</accession>
<comment type="function">
    <text evidence="1">Binds 16S rRNA, required for the assembly of 30S particles and may also be responsible for determining the conformation of the 16S rRNA at the A site.</text>
</comment>
<comment type="subunit">
    <text evidence="1">Part of the 30S ribosomal subunit. Contacts proteins S3 and S10.</text>
</comment>
<comment type="similarity">
    <text evidence="1">Belongs to the universal ribosomal protein uS14 family.</text>
</comment>
<proteinExistence type="inferred from homology"/>
<reference key="1">
    <citation type="journal article" date="2013" name="Stand. Genomic Sci.">
        <title>Complete genome sequence of Arthrobacter sp. strain FB24.</title>
        <authorList>
            <person name="Nakatsu C.H."/>
            <person name="Barabote R."/>
            <person name="Thompson S."/>
            <person name="Bruce D."/>
            <person name="Detter C."/>
            <person name="Brettin T."/>
            <person name="Han C."/>
            <person name="Beasley F."/>
            <person name="Chen W."/>
            <person name="Konopka A."/>
            <person name="Xie G."/>
        </authorList>
    </citation>
    <scope>NUCLEOTIDE SEQUENCE [LARGE SCALE GENOMIC DNA]</scope>
    <source>
        <strain>FB24</strain>
    </source>
</reference>
<keyword id="KW-1185">Reference proteome</keyword>
<keyword id="KW-0687">Ribonucleoprotein</keyword>
<keyword id="KW-0689">Ribosomal protein</keyword>
<keyword id="KW-0694">RNA-binding</keyword>
<keyword id="KW-0699">rRNA-binding</keyword>
<gene>
    <name evidence="1" type="primary">rpsN</name>
    <name type="ordered locus">Arth_3919</name>
</gene>